<evidence type="ECO:0000255" key="1">
    <source>
        <dbReference type="HAMAP-Rule" id="MF_00023"/>
    </source>
</evidence>
<evidence type="ECO:0000256" key="2">
    <source>
        <dbReference type="SAM" id="MobiDB-lite"/>
    </source>
</evidence>
<name>SSRP_PSYA2</name>
<comment type="function">
    <text evidence="1">Required for rescue of stalled ribosomes mediated by trans-translation. Binds to transfer-messenger RNA (tmRNA), required for stable association of tmRNA with ribosomes. tmRNA and SmpB together mimic tRNA shape, replacing the anticodon stem-loop with SmpB. tmRNA is encoded by the ssrA gene; the 2 termini fold to resemble tRNA(Ala) and it encodes a 'tag peptide', a short internal open reading frame. During trans-translation Ala-aminoacylated tmRNA acts like a tRNA, entering the A-site of stalled ribosomes, displacing the stalled mRNA. The ribosome then switches to translate the ORF on the tmRNA; the nascent peptide is terminated with the 'tag peptide' encoded by the tmRNA and targeted for degradation. The ribosome is freed to recommence translation, which seems to be the essential function of trans-translation.</text>
</comment>
<comment type="subcellular location">
    <subcellularLocation>
        <location evidence="1">Cytoplasm</location>
    </subcellularLocation>
    <text evidence="1">The tmRNA-SmpB complex associates with stalled 70S ribosomes.</text>
</comment>
<comment type="similarity">
    <text evidence="1">Belongs to the SmpB family.</text>
</comment>
<feature type="chain" id="PRO_1000002118" description="SsrA-binding protein">
    <location>
        <begin position="1"/>
        <end position="158"/>
    </location>
</feature>
<feature type="region of interest" description="Disordered" evidence="2">
    <location>
        <begin position="135"/>
        <end position="158"/>
    </location>
</feature>
<feature type="compositionally biased region" description="Basic and acidic residues" evidence="2">
    <location>
        <begin position="141"/>
        <end position="158"/>
    </location>
</feature>
<gene>
    <name evidence="1" type="primary">smpB</name>
    <name type="ordered locus">Psyc_0325</name>
</gene>
<organism>
    <name type="scientific">Psychrobacter arcticus (strain DSM 17307 / VKM B-2377 / 273-4)</name>
    <dbReference type="NCBI Taxonomy" id="259536"/>
    <lineage>
        <taxon>Bacteria</taxon>
        <taxon>Pseudomonadati</taxon>
        <taxon>Pseudomonadota</taxon>
        <taxon>Gammaproteobacteria</taxon>
        <taxon>Moraxellales</taxon>
        <taxon>Moraxellaceae</taxon>
        <taxon>Psychrobacter</taxon>
    </lineage>
</organism>
<protein>
    <recommendedName>
        <fullName evidence="1">SsrA-binding protein</fullName>
    </recommendedName>
    <alternativeName>
        <fullName evidence="1">Small protein B</fullName>
    </alternativeName>
</protein>
<accession>Q4FUW4</accession>
<sequence length="158" mass="18300">MSKKSKKPENQICANKKARHEYFIEETFEAGLSLQGWEVKAIRAGKMTITEAYIIFRNNEAFLFGAHIQPLLSSSTHVSPDSIRTRKLLLNRREIEKLFGAVNQKGYACVPLSCYWKNSLVKCQIGLALGKKQHDKRKTLKDRDWERDKQRGFKKDLD</sequence>
<dbReference type="EMBL" id="CP000082">
    <property type="protein sequence ID" value="AAZ18194.1"/>
    <property type="molecule type" value="Genomic_DNA"/>
</dbReference>
<dbReference type="RefSeq" id="WP_011279632.1">
    <property type="nucleotide sequence ID" value="NC_007204.1"/>
</dbReference>
<dbReference type="SMR" id="Q4FUW4"/>
<dbReference type="STRING" id="259536.Psyc_0325"/>
<dbReference type="KEGG" id="par:Psyc_0325"/>
<dbReference type="eggNOG" id="COG0691">
    <property type="taxonomic scope" value="Bacteria"/>
</dbReference>
<dbReference type="HOGENOM" id="CLU_108953_3_0_6"/>
<dbReference type="OrthoDB" id="9805462at2"/>
<dbReference type="Proteomes" id="UP000000546">
    <property type="component" value="Chromosome"/>
</dbReference>
<dbReference type="GO" id="GO:0005829">
    <property type="term" value="C:cytosol"/>
    <property type="evidence" value="ECO:0007669"/>
    <property type="project" value="TreeGrafter"/>
</dbReference>
<dbReference type="GO" id="GO:0003723">
    <property type="term" value="F:RNA binding"/>
    <property type="evidence" value="ECO:0007669"/>
    <property type="project" value="UniProtKB-UniRule"/>
</dbReference>
<dbReference type="GO" id="GO:0070929">
    <property type="term" value="P:trans-translation"/>
    <property type="evidence" value="ECO:0007669"/>
    <property type="project" value="UniProtKB-UniRule"/>
</dbReference>
<dbReference type="CDD" id="cd09294">
    <property type="entry name" value="SmpB"/>
    <property type="match status" value="1"/>
</dbReference>
<dbReference type="Gene3D" id="2.40.280.10">
    <property type="match status" value="1"/>
</dbReference>
<dbReference type="HAMAP" id="MF_00023">
    <property type="entry name" value="SmpB"/>
    <property type="match status" value="1"/>
</dbReference>
<dbReference type="InterPro" id="IPR023620">
    <property type="entry name" value="SmpB"/>
</dbReference>
<dbReference type="InterPro" id="IPR000037">
    <property type="entry name" value="SsrA-bd_prot"/>
</dbReference>
<dbReference type="InterPro" id="IPR020081">
    <property type="entry name" value="SsrA-bd_prot_CS"/>
</dbReference>
<dbReference type="NCBIfam" id="NF003843">
    <property type="entry name" value="PRK05422.1"/>
    <property type="match status" value="1"/>
</dbReference>
<dbReference type="NCBIfam" id="TIGR00086">
    <property type="entry name" value="smpB"/>
    <property type="match status" value="1"/>
</dbReference>
<dbReference type="PANTHER" id="PTHR30308:SF2">
    <property type="entry name" value="SSRA-BINDING PROTEIN"/>
    <property type="match status" value="1"/>
</dbReference>
<dbReference type="PANTHER" id="PTHR30308">
    <property type="entry name" value="TMRNA-BINDING COMPONENT OF TRANS-TRANSLATION TAGGING COMPLEX"/>
    <property type="match status" value="1"/>
</dbReference>
<dbReference type="Pfam" id="PF01668">
    <property type="entry name" value="SmpB"/>
    <property type="match status" value="1"/>
</dbReference>
<dbReference type="SUPFAM" id="SSF74982">
    <property type="entry name" value="Small protein B (SmpB)"/>
    <property type="match status" value="1"/>
</dbReference>
<dbReference type="PROSITE" id="PS01317">
    <property type="entry name" value="SSRP"/>
    <property type="match status" value="1"/>
</dbReference>
<reference key="1">
    <citation type="journal article" date="2010" name="Appl. Environ. Microbiol.">
        <title>The genome sequence of Psychrobacter arcticus 273-4, a psychroactive Siberian permafrost bacterium, reveals mechanisms for adaptation to low-temperature growth.</title>
        <authorList>
            <person name="Ayala-del-Rio H.L."/>
            <person name="Chain P.S."/>
            <person name="Grzymski J.J."/>
            <person name="Ponder M.A."/>
            <person name="Ivanova N."/>
            <person name="Bergholz P.W."/>
            <person name="Di Bartolo G."/>
            <person name="Hauser L."/>
            <person name="Land M."/>
            <person name="Bakermans C."/>
            <person name="Rodrigues D."/>
            <person name="Klappenbach J."/>
            <person name="Zarka D."/>
            <person name="Larimer F."/>
            <person name="Richardson P."/>
            <person name="Murray A."/>
            <person name="Thomashow M."/>
            <person name="Tiedje J.M."/>
        </authorList>
    </citation>
    <scope>NUCLEOTIDE SEQUENCE [LARGE SCALE GENOMIC DNA]</scope>
    <source>
        <strain>DSM 17307 / VKM B-2377 / 273-4</strain>
    </source>
</reference>
<keyword id="KW-0963">Cytoplasm</keyword>
<keyword id="KW-1185">Reference proteome</keyword>
<keyword id="KW-0694">RNA-binding</keyword>
<proteinExistence type="inferred from homology"/>